<organism>
    <name type="scientific">Pongo abelii</name>
    <name type="common">Sumatran orangutan</name>
    <name type="synonym">Pongo pygmaeus abelii</name>
    <dbReference type="NCBI Taxonomy" id="9601"/>
    <lineage>
        <taxon>Eukaryota</taxon>
        <taxon>Metazoa</taxon>
        <taxon>Chordata</taxon>
        <taxon>Craniata</taxon>
        <taxon>Vertebrata</taxon>
        <taxon>Euteleostomi</taxon>
        <taxon>Mammalia</taxon>
        <taxon>Eutheria</taxon>
        <taxon>Euarchontoglires</taxon>
        <taxon>Primates</taxon>
        <taxon>Haplorrhini</taxon>
        <taxon>Catarrhini</taxon>
        <taxon>Hominidae</taxon>
        <taxon>Pongo</taxon>
    </lineage>
</organism>
<accession>Q5RBG4</accession>
<comment type="function">
    <text evidence="1 2">Catalytic subunit of the NuA4 histone acetyltransferase complex, a multiprotein complex involved in transcriptional activation of select genes principally by acetylation of nucleosomal histones H2A and H4. Histone acetylation alters nucleosome-DNA interactions and promotes interaction of the modified histones with other proteins which positively regulate transcription. The NuA4 histone acetyltransferase complex is required for the activation of transcriptional programs associated with proto-oncogene mediated growth induction, tumor suppressor mediated growth arrest and replicative senescence, apoptosis, and DNA repair. The NuA4 complex plays a direct role in repair of DNA double-strand breaks (DSBs) by promoting homologous recombination (HR): the complex inhibits TP53BP1 binding to chromatin via MBTD1, which recognizes and binds histone H4 trimethylated at 'Lys-20' (H4K20me), and KAT5 that catalyzes acetylation of 'Lys-15' of histone H2A (H2AK15ac), thereby blocking the ubiquitination mark required for TP53BP1 localization at DNA breaks. Also involved in DSB repair by mediating acetylation of 'Lys-5' of histone H2AX (H2AXK5ac), promoting NBN/NBS1 assembly at the sites of DNA damage (By similarity). The NuA4 complex plays a key role in hematopoietic stem cell maintenance and is required to maintain acetylated H2A.Z/H2AZ1 at MYC target genes. The NuA4 complex is also required for spermatid development by promoting acetylation of histones: histone hyperacetylation is required for histone replacement during the transition from round to elongating spermatids (By similarity). Component of a SWR1-like complex that specifically mediates the removal of histone H2A.Z/H2AZ1 from the nucleosome. Also acetylates non-histone proteins, such as BMAL1, ATM, AURKB, CHKA, CGAS, ERCC4/XPF, LPIN1, TP53/p53, NDC80/HEC1, NR1D2, RAN, SOX4, FOXP3, SQSTM1, ULK1 and RUBCNL/Pacer. Directly acetylates and activates ATM. Promotes nucleotide excision repair (NER) by mediating acetylation of ERCC4/XPF, thereby promoting formation of the ERCC4-ERCC1 complex. Relieves NR1D2-mediated inhibition of APOC3 expression by acetylating NR1D2. Acts as a regulator of regulatory T-cells (Treg) by catalyzing FOXP3 acetylation, thereby promoting FOXP3 transcriptional repressor activity. Involved in skeletal myoblast differentiation by mediating acetylation of SOX4. Catalyzes acetylation of APBB1/FE65, increasing its transcription activator activity (By similarity). Promotes transcription elongation during the activation phase of the circadian cycle by catalyzing acetylation of BMAL1, promoting elongation of circadian transcripts (By similarity). Together with GSK3 (GSK3A or GSK3B), acts as a regulator of autophagy: phosphorylated at Ser-86 by GSK3 under starvation conditions, leading to activate acetyltransferase activity and promote acetylation of key autophagy regulators, such as ULK1 and RUBCNL/Pacer. Acts as a regulator of the cGAS-STING innate antiviral response by catalyzing acetylation the N-terminus of CGAS, thereby promoting CGAS DNA-binding and activation. Also regulates lipid metabolism by mediating acetylation of CHKA or LPIN1. Promotes lipolysis of lipid droplets following glucose deprivation by mediating acetylation of isoform 1 of CHKA, thereby promoting monomerization of CHKA and its conversion into a tyrosine-protein kinase. Acts as a regulator of fatty-acid-induced triacylglycerol synthesis by catalyzing acetylation of LPIN1, thereby promoting the synthesis of diacylglycerol. In addition to protein acetyltransferase, can use different acyl-CoA substrates, such as (2E)-butenoyl-CoA (crotonyl-CoA), S-lactoyl-CoA (lactyl-CoA) and 2-hydroxyisobutanoyl-CoA (2-hydroxyisobutyryl-CoA), and is able to mediate protein crotonylation, lactylation and 2-hydroxyisobutyrylation, respectively. Acts as a key regulator of chromosome segregation and kinetochore-microtubule attachment during mitosis by mediating acetylation or crotonylation of target proteins. Catalyzes acetylation of AURKB at kinetochores, increasing AURKB activity and promoting accurate chromosome segregation in mitosis. Acetylates RAN during mitosis, promoting microtubule assembly at mitotic chromosomes. Acetylates NDC80/HEC1 during mitosis, promoting robust kinetochore-microtubule attachment. Catalyzes crotonylation of MAPRE1/EB1, thereby ensuring accurate spindle positioning in mitosis. Catalyzes lactylation of NBN/NBS1 in response to DNA damage, thereby promoting DNA double-strand breaks (DSBs) via homologous recombination (HR) (By similarity).</text>
</comment>
<comment type="catalytic activity">
    <reaction evidence="2">
        <text>L-lysyl-[histone] + acetyl-CoA = N(6)-acetyl-L-lysyl-[histone] + CoA + H(+)</text>
        <dbReference type="Rhea" id="RHEA:21992"/>
        <dbReference type="Rhea" id="RHEA-COMP:9845"/>
        <dbReference type="Rhea" id="RHEA-COMP:11338"/>
        <dbReference type="ChEBI" id="CHEBI:15378"/>
        <dbReference type="ChEBI" id="CHEBI:29969"/>
        <dbReference type="ChEBI" id="CHEBI:57287"/>
        <dbReference type="ChEBI" id="CHEBI:57288"/>
        <dbReference type="ChEBI" id="CHEBI:61930"/>
        <dbReference type="EC" id="2.3.1.48"/>
    </reaction>
    <physiologicalReaction direction="left-to-right" evidence="2">
        <dbReference type="Rhea" id="RHEA:21993"/>
    </physiologicalReaction>
</comment>
<comment type="catalytic activity">
    <reaction evidence="2">
        <text>L-lysyl-[protein] + acetyl-CoA = N(6)-acetyl-L-lysyl-[protein] + CoA + H(+)</text>
        <dbReference type="Rhea" id="RHEA:45948"/>
        <dbReference type="Rhea" id="RHEA-COMP:9752"/>
        <dbReference type="Rhea" id="RHEA-COMP:10731"/>
        <dbReference type="ChEBI" id="CHEBI:15378"/>
        <dbReference type="ChEBI" id="CHEBI:29969"/>
        <dbReference type="ChEBI" id="CHEBI:57287"/>
        <dbReference type="ChEBI" id="CHEBI:57288"/>
        <dbReference type="ChEBI" id="CHEBI:61930"/>
    </reaction>
    <physiologicalReaction direction="left-to-right" evidence="2">
        <dbReference type="Rhea" id="RHEA:45949"/>
    </physiologicalReaction>
</comment>
<comment type="catalytic activity">
    <reaction evidence="2">
        <text>(2E)-butenoyl-CoA + L-lysyl-[protein] = N(6)-(2E)-butenoyl-L-lysyl-[protein] + CoA + H(+)</text>
        <dbReference type="Rhea" id="RHEA:53908"/>
        <dbReference type="Rhea" id="RHEA-COMP:9752"/>
        <dbReference type="Rhea" id="RHEA-COMP:13707"/>
        <dbReference type="ChEBI" id="CHEBI:15378"/>
        <dbReference type="ChEBI" id="CHEBI:29969"/>
        <dbReference type="ChEBI" id="CHEBI:57287"/>
        <dbReference type="ChEBI" id="CHEBI:57332"/>
        <dbReference type="ChEBI" id="CHEBI:137954"/>
    </reaction>
    <physiologicalReaction direction="left-to-right" evidence="2">
        <dbReference type="Rhea" id="RHEA:53909"/>
    </physiologicalReaction>
</comment>
<comment type="catalytic activity">
    <reaction evidence="2">
        <text>2-hydroxyisobutanoyl-CoA + L-lysyl-[protein] = N(6)-(2-hydroxyisobutanoyl)-L-lysyl-[protein] + CoA + H(+)</text>
        <dbReference type="Rhea" id="RHEA:24180"/>
        <dbReference type="Rhea" id="RHEA-COMP:9752"/>
        <dbReference type="Rhea" id="RHEA-COMP:15921"/>
        <dbReference type="ChEBI" id="CHEBI:15378"/>
        <dbReference type="ChEBI" id="CHEBI:29969"/>
        <dbReference type="ChEBI" id="CHEBI:57287"/>
        <dbReference type="ChEBI" id="CHEBI:131780"/>
        <dbReference type="ChEBI" id="CHEBI:144968"/>
    </reaction>
    <physiologicalReaction direction="left-to-right" evidence="2">
        <dbReference type="Rhea" id="RHEA:24181"/>
    </physiologicalReaction>
</comment>
<comment type="catalytic activity">
    <reaction evidence="2">
        <text>(S)-lactoyl-CoA + L-lysyl-[protein] = N(6)-[(S)-lactoyl]-L-lysyl-[protein] + CoA + H(+)</text>
        <dbReference type="Rhea" id="RHEA:61996"/>
        <dbReference type="Rhea" id="RHEA-COMP:9752"/>
        <dbReference type="Rhea" id="RHEA-COMP:19466"/>
        <dbReference type="ChEBI" id="CHEBI:15378"/>
        <dbReference type="ChEBI" id="CHEBI:29969"/>
        <dbReference type="ChEBI" id="CHEBI:57287"/>
        <dbReference type="ChEBI" id="CHEBI:231527"/>
        <dbReference type="ChEBI" id="CHEBI:231528"/>
    </reaction>
    <physiologicalReaction direction="left-to-right" evidence="2">
        <dbReference type="Rhea" id="RHEA:61997"/>
    </physiologicalReaction>
</comment>
<comment type="activity regulation">
    <text evidence="2">Acyltransferase and acetyltransferase activities are activated by phosphorylation and autoacetylation. Autoacetylation activates the histone acetyltransferase activity.</text>
</comment>
<comment type="subunit">
    <text evidence="1 2">Component of the NuA4 histone acetyltransferase complex which contains the catalytic subunit KAT5/TIP60 and the subunits EP400, TRRAP/PAF400, BRD8/SMAP, EPC1, DMAP1/DNMAP1, RUVBL1/TIP49, RUVBL2, ING3, actin, ACTL6A/BAF53A, MORF4L1/MRG15, MORF4L2/MRGX, MRGBP, YEATS4/GAS41, VPS72/YL1 and MEAF6 (By similarity). KAT5/TIP60, EPC1, and ING3 together constitute a minimal HAT complex termed Piccolo NuA4. The NuA4 complex interacts with MYC. Interacts with ATM. Interacts with JADE1. Interacts with PLA2G4A/CPLA2, EDNRA and HDAC7. Interacts with the cytoplasmic tail of APP and APBB1/FE65. Interacts with TRIM24 and TRIM68. Forms a complex with SENP6 and UBE2I in response to UV irradiation. Identified in a complex with HINT1. Interacts with ATF2 and CUL3. Interacts with NR1D2 (via N-terminus). Component of a SWR1-like complex (By similarity). Interacts with FOXP3 (By similarity). Interacts with ZBTB49 (By similarity). Interacts with SRF (By similarity). Interacts with ATF3; promoting autoacetylation and deubiquitination by USP7. Interacts with EP300/p300; interaction promotes KAT5 autoacetylation. Interacts with PRKDC; interaction is impaired following KAT5 sumoylation (By similarity). Interacts with GPR50 (By similarity).</text>
</comment>
<comment type="subcellular location">
    <subcellularLocation>
        <location evidence="2">Nucleus</location>
    </subcellularLocation>
    <subcellularLocation>
        <location evidence="2">Chromosome</location>
    </subcellularLocation>
    <subcellularLocation>
        <location evidence="2">Cytoplasm</location>
    </subcellularLocation>
    <subcellularLocation>
        <location evidence="2">Chromosome</location>
        <location evidence="2">Centromere</location>
        <location evidence="2">Kinetochore</location>
    </subcellularLocation>
    <subcellularLocation>
        <location evidence="2">Cytoplasm</location>
        <location evidence="2">Cytoskeleton</location>
        <location evidence="2">Spindle pole</location>
    </subcellularLocation>
    <subcellularLocation>
        <location evidence="2">Nucleus</location>
        <location evidence="2">Nucleolus</location>
    </subcellularLocation>
    <subcellularLocation>
        <location evidence="2">Cytoplasm</location>
        <location evidence="2">Perinuclear region</location>
    </subcellularLocation>
    <text evidence="1 2">Upon stimulation with EDN1, it is exported from the nucleus to the perinuclear region and UV irradiation induces translocation into punctuate subnuclear structures named nuclear bodies. Transiently localizes to kinetochores in early mitosis. Localizes to spindle poles when chromosomes align during metaphase (By similarity). Localizes in the cytoplasm and nucleus of round spermatids (By similarity).</text>
</comment>
<comment type="PTM">
    <text evidence="2">Phosphorylated on Ser-86 and Ser-90; enhanced during G2/M phase. The phosphorylated form has a higher activity. Phosphorylation at Ser-90 by CDK1 or CDK9 is a prerequisite for phosphorylation at Ser-86 by GSK3. Phosphorylation at Ser-86 by GSK3 (GSK3A or GSK3B) activates acetyltransferase and acyltransferase activities. Phosphorylation at Ser-90 by CDK9 promotes KAT5 recruitment to chromatin. Phosphorylation by VRK1 following DNA damage promotes KAT5 association with chromatin and histone acetyltransferase activity.</text>
</comment>
<comment type="PTM">
    <text evidence="2">Autoacetylated. Autoacetylation is required for histone acetyltransferase activity. Autoacetylation at Lys-275 is facilitated by interaction with EP300/p300: it prevents ubiquitination and subsequent degradation by the proteasome and promotes acetylation of target proteins. Deacetylated by HDAC3 and SIRT1. Deacetylation by HDAC3 promotes its ubiquitination and cytoplasmic localization.</text>
</comment>
<comment type="PTM">
    <text evidence="2">Sumoylated by UBE2I at Lys-378 and Lys-399, leading to increase of its histone acetyltransferase activity in UV-induced DNA damage response, as well as its translocation to nuclear bodies. Sumoylation with SUMO2 by PIAS4 at Lys-378 promotes repair of DNA double-strand breaks (DSBs) via homologous recombination (HR). Sumoylation by PIAS4 impairs interaction with PRKDC, inhibiting non-homologous end joining (NHEJ)-mediated repair of DSBs, thereby facilitating HR. Desumoylated by SENP3.</text>
</comment>
<comment type="PTM">
    <text evidence="2">Ubiquitinated by MDM2, leading to its proteasome-dependent degradation. Ubiquitination is prevented by autoacetylation at Lys-275. Ubiquitinated following deacetylation by HDAC3, leading to cytoplasmic localization. Deubiquitinated by USP7 following interaction with ATF3, promoting its stabilization.</text>
</comment>
<comment type="similarity">
    <text evidence="7">Belongs to the MYST (SAS/MOZ) family.</text>
</comment>
<evidence type="ECO:0000250" key="1">
    <source>
        <dbReference type="UniProtKB" id="Q8CHK4"/>
    </source>
</evidence>
<evidence type="ECO:0000250" key="2">
    <source>
        <dbReference type="UniProtKB" id="Q92993"/>
    </source>
</evidence>
<evidence type="ECO:0000250" key="3">
    <source>
        <dbReference type="UniProtKB" id="Q9H7Z6"/>
    </source>
</evidence>
<evidence type="ECO:0000255" key="4"/>
<evidence type="ECO:0000255" key="5">
    <source>
        <dbReference type="PROSITE-ProRule" id="PRU01063"/>
    </source>
</evidence>
<evidence type="ECO:0000256" key="6">
    <source>
        <dbReference type="SAM" id="MobiDB-lite"/>
    </source>
</evidence>
<evidence type="ECO:0000305" key="7"/>
<reference key="1">
    <citation type="submission" date="2004-11" db="EMBL/GenBank/DDBJ databases">
        <authorList>
            <consortium name="The German cDNA consortium"/>
        </authorList>
    </citation>
    <scope>NUCLEOTIDE SEQUENCE [LARGE SCALE MRNA]</scope>
    <source>
        <tissue>Heart</tissue>
    </source>
</reference>
<dbReference type="EC" id="2.3.1.48" evidence="2"/>
<dbReference type="EC" id="2.3.1.-" evidence="2"/>
<dbReference type="EMBL" id="CR858684">
    <property type="protein sequence ID" value="CAH90896.1"/>
    <property type="molecule type" value="mRNA"/>
</dbReference>
<dbReference type="RefSeq" id="NP_001127347.1">
    <property type="nucleotide sequence ID" value="NM_001133875.1"/>
</dbReference>
<dbReference type="SMR" id="Q5RBG4"/>
<dbReference type="STRING" id="9601.ENSPPYP00000003532"/>
<dbReference type="GeneID" id="100174410"/>
<dbReference type="KEGG" id="pon:100174410"/>
<dbReference type="CTD" id="10524"/>
<dbReference type="InParanoid" id="Q5RBG4"/>
<dbReference type="OrthoDB" id="787137at2759"/>
<dbReference type="Proteomes" id="UP000001595">
    <property type="component" value="Unplaced"/>
</dbReference>
<dbReference type="GO" id="GO:0005737">
    <property type="term" value="C:cytoplasm"/>
    <property type="evidence" value="ECO:0000250"/>
    <property type="project" value="UniProtKB"/>
</dbReference>
<dbReference type="GO" id="GO:0000776">
    <property type="term" value="C:kinetochore"/>
    <property type="evidence" value="ECO:0000250"/>
    <property type="project" value="UniProtKB"/>
</dbReference>
<dbReference type="GO" id="GO:0035267">
    <property type="term" value="C:NuA4 histone acetyltransferase complex"/>
    <property type="evidence" value="ECO:0000250"/>
    <property type="project" value="UniProtKB"/>
</dbReference>
<dbReference type="GO" id="GO:0005730">
    <property type="term" value="C:nucleolus"/>
    <property type="evidence" value="ECO:0000250"/>
    <property type="project" value="UniProtKB"/>
</dbReference>
<dbReference type="GO" id="GO:0005634">
    <property type="term" value="C:nucleus"/>
    <property type="evidence" value="ECO:0000250"/>
    <property type="project" value="UniProtKB"/>
</dbReference>
<dbReference type="GO" id="GO:0048471">
    <property type="term" value="C:perinuclear region of cytoplasm"/>
    <property type="evidence" value="ECO:0007669"/>
    <property type="project" value="UniProtKB-SubCell"/>
</dbReference>
<dbReference type="GO" id="GO:0032777">
    <property type="term" value="C:piccolo histone acetyltransferase complex"/>
    <property type="evidence" value="ECO:0000250"/>
    <property type="project" value="UniProtKB"/>
</dbReference>
<dbReference type="GO" id="GO:0000922">
    <property type="term" value="C:spindle pole"/>
    <property type="evidence" value="ECO:0007669"/>
    <property type="project" value="UniProtKB-SubCell"/>
</dbReference>
<dbReference type="GO" id="GO:0000812">
    <property type="term" value="C:Swr1 complex"/>
    <property type="evidence" value="ECO:0000250"/>
    <property type="project" value="UniProtKB"/>
</dbReference>
<dbReference type="GO" id="GO:0003682">
    <property type="term" value="F:chromatin binding"/>
    <property type="evidence" value="ECO:0000250"/>
    <property type="project" value="UniProtKB"/>
</dbReference>
<dbReference type="GO" id="GO:0004402">
    <property type="term" value="F:histone acetyltransferase activity"/>
    <property type="evidence" value="ECO:0000250"/>
    <property type="project" value="UniProtKB"/>
</dbReference>
<dbReference type="GO" id="GO:0043998">
    <property type="term" value="F:histone H2A acetyltransferase activity"/>
    <property type="evidence" value="ECO:0000250"/>
    <property type="project" value="UniProtKB"/>
</dbReference>
<dbReference type="GO" id="GO:0046972">
    <property type="term" value="F:histone H4K16 acetyltransferase activity"/>
    <property type="evidence" value="ECO:0007669"/>
    <property type="project" value="TreeGrafter"/>
</dbReference>
<dbReference type="GO" id="GO:0106226">
    <property type="term" value="F:peptide 2-hydroxyisobutyryltransferase activity"/>
    <property type="evidence" value="ECO:0007669"/>
    <property type="project" value="RHEA"/>
</dbReference>
<dbReference type="GO" id="GO:0140065">
    <property type="term" value="F:peptide butyryltransferase activity"/>
    <property type="evidence" value="ECO:0000250"/>
    <property type="project" value="UniProtKB"/>
</dbReference>
<dbReference type="GO" id="GO:0140064">
    <property type="term" value="F:peptide crotonyltransferase activity"/>
    <property type="evidence" value="ECO:0000250"/>
    <property type="project" value="UniProtKB"/>
</dbReference>
<dbReference type="GO" id="GO:0120300">
    <property type="term" value="F:peptide lactyltransferase (CoA-dependent) activity"/>
    <property type="evidence" value="ECO:0000250"/>
    <property type="project" value="UniProtKB"/>
</dbReference>
<dbReference type="GO" id="GO:0061733">
    <property type="term" value="F:protein-lysine-acetyltransferase activity"/>
    <property type="evidence" value="ECO:0000250"/>
    <property type="project" value="UniProtKB"/>
</dbReference>
<dbReference type="GO" id="GO:0003713">
    <property type="term" value="F:transcription coactivator activity"/>
    <property type="evidence" value="ECO:0000250"/>
    <property type="project" value="UniProtKB"/>
</dbReference>
<dbReference type="GO" id="GO:0008270">
    <property type="term" value="F:zinc ion binding"/>
    <property type="evidence" value="ECO:0007669"/>
    <property type="project" value="UniProtKB-KW"/>
</dbReference>
<dbReference type="GO" id="GO:0042149">
    <property type="term" value="P:cellular response to glucose starvation"/>
    <property type="evidence" value="ECO:0000250"/>
    <property type="project" value="UniProtKB"/>
</dbReference>
<dbReference type="GO" id="GO:0006974">
    <property type="term" value="P:DNA damage response"/>
    <property type="evidence" value="ECO:0000250"/>
    <property type="project" value="UniProtKB"/>
</dbReference>
<dbReference type="GO" id="GO:0030330">
    <property type="term" value="P:DNA damage response, signal transduction by p53 class mediator"/>
    <property type="evidence" value="ECO:0000250"/>
    <property type="project" value="UniProtKB"/>
</dbReference>
<dbReference type="GO" id="GO:0006302">
    <property type="term" value="P:double-strand break repair"/>
    <property type="evidence" value="ECO:0000250"/>
    <property type="project" value="UniProtKB"/>
</dbReference>
<dbReference type="GO" id="GO:0000724">
    <property type="term" value="P:double-strand break repair via homologous recombination"/>
    <property type="evidence" value="ECO:0000250"/>
    <property type="project" value="UniProtKB"/>
</dbReference>
<dbReference type="GO" id="GO:0000132">
    <property type="term" value="P:establishment of mitotic spindle orientation"/>
    <property type="evidence" value="ECO:0000250"/>
    <property type="project" value="UniProtKB"/>
</dbReference>
<dbReference type="GO" id="GO:0045087">
    <property type="term" value="P:innate immune response"/>
    <property type="evidence" value="ECO:0007669"/>
    <property type="project" value="UniProtKB-KW"/>
</dbReference>
<dbReference type="GO" id="GO:1905691">
    <property type="term" value="P:lipid droplet disassembly"/>
    <property type="evidence" value="ECO:0000250"/>
    <property type="project" value="UniProtKB"/>
</dbReference>
<dbReference type="GO" id="GO:0006289">
    <property type="term" value="P:nucleotide-excision repair"/>
    <property type="evidence" value="ECO:0000250"/>
    <property type="project" value="UniProtKB"/>
</dbReference>
<dbReference type="GO" id="GO:0018394">
    <property type="term" value="P:peptidyl-lysine acetylation"/>
    <property type="evidence" value="ECO:0000250"/>
    <property type="project" value="UniProtKB"/>
</dbReference>
<dbReference type="GO" id="GO:1902425">
    <property type="term" value="P:positive regulation of attachment of mitotic spindle microtubules to kinetochore"/>
    <property type="evidence" value="ECO:0000250"/>
    <property type="project" value="UniProtKB"/>
</dbReference>
<dbReference type="GO" id="GO:0010508">
    <property type="term" value="P:positive regulation of autophagy"/>
    <property type="evidence" value="ECO:0000250"/>
    <property type="project" value="UniProtKB"/>
</dbReference>
<dbReference type="GO" id="GO:0042753">
    <property type="term" value="P:positive regulation of circadian rhythm"/>
    <property type="evidence" value="ECO:0000250"/>
    <property type="project" value="UniProtKB"/>
</dbReference>
<dbReference type="GO" id="GO:0045893">
    <property type="term" value="P:positive regulation of DNA-templated transcription"/>
    <property type="evidence" value="ECO:0000250"/>
    <property type="project" value="UniProtKB"/>
</dbReference>
<dbReference type="GO" id="GO:1905168">
    <property type="term" value="P:positive regulation of double-strand break repair via homologous recombination"/>
    <property type="evidence" value="ECO:0000250"/>
    <property type="project" value="UniProtKB"/>
</dbReference>
<dbReference type="GO" id="GO:0062033">
    <property type="term" value="P:positive regulation of mitotic sister chromatid segregation"/>
    <property type="evidence" value="ECO:0000250"/>
    <property type="project" value="UniProtKB"/>
</dbReference>
<dbReference type="GO" id="GO:0045663">
    <property type="term" value="P:positive regulation of myoblast differentiation"/>
    <property type="evidence" value="ECO:0000250"/>
    <property type="project" value="UniProtKB"/>
</dbReference>
<dbReference type="GO" id="GO:0045591">
    <property type="term" value="P:positive regulation of regulatory T cell differentiation"/>
    <property type="evidence" value="ECO:0000250"/>
    <property type="project" value="UniProtKB"/>
</dbReference>
<dbReference type="GO" id="GO:0045944">
    <property type="term" value="P:positive regulation of transcription by RNA polymerase II"/>
    <property type="evidence" value="ECO:0000250"/>
    <property type="project" value="UniProtKB"/>
</dbReference>
<dbReference type="GO" id="GO:0010867">
    <property type="term" value="P:positive regulation of triglyceride biosynthetic process"/>
    <property type="evidence" value="ECO:0000250"/>
    <property type="project" value="UniProtKB"/>
</dbReference>
<dbReference type="GO" id="GO:1902036">
    <property type="term" value="P:regulation of hematopoietic stem cell differentiation"/>
    <property type="evidence" value="ECO:0000250"/>
    <property type="project" value="UniProtKB"/>
</dbReference>
<dbReference type="GO" id="GO:0007286">
    <property type="term" value="P:spermatid development"/>
    <property type="evidence" value="ECO:0000250"/>
    <property type="project" value="UniProtKB"/>
</dbReference>
<dbReference type="CDD" id="cd18985">
    <property type="entry name" value="CBD_TIP60_like"/>
    <property type="match status" value="1"/>
</dbReference>
<dbReference type="CDD" id="cd04301">
    <property type="entry name" value="NAT_SF"/>
    <property type="match status" value="1"/>
</dbReference>
<dbReference type="FunFam" id="1.10.10.10:FF:000022">
    <property type="entry name" value="Histone acetyltransferase"/>
    <property type="match status" value="1"/>
</dbReference>
<dbReference type="FunFam" id="2.30.30.140:FF:000013">
    <property type="entry name" value="Histone acetyltransferase"/>
    <property type="match status" value="1"/>
</dbReference>
<dbReference type="FunFam" id="3.30.60.60:FF:000001">
    <property type="entry name" value="Histone acetyltransferase"/>
    <property type="match status" value="1"/>
</dbReference>
<dbReference type="FunFam" id="3.40.630.30:FF:000002">
    <property type="entry name" value="Histone acetyltransferase"/>
    <property type="match status" value="1"/>
</dbReference>
<dbReference type="Gene3D" id="2.30.30.140">
    <property type="match status" value="1"/>
</dbReference>
<dbReference type="Gene3D" id="3.40.630.30">
    <property type="match status" value="1"/>
</dbReference>
<dbReference type="Gene3D" id="3.30.60.60">
    <property type="entry name" value="N-acetyl transferase-like"/>
    <property type="match status" value="1"/>
</dbReference>
<dbReference type="Gene3D" id="1.10.10.10">
    <property type="entry name" value="Winged helix-like DNA-binding domain superfamily/Winged helix DNA-binding domain"/>
    <property type="match status" value="1"/>
</dbReference>
<dbReference type="InterPro" id="IPR016181">
    <property type="entry name" value="Acyl_CoA_acyltransferase"/>
</dbReference>
<dbReference type="InterPro" id="IPR016197">
    <property type="entry name" value="Chromo-like_dom_sf"/>
</dbReference>
<dbReference type="InterPro" id="IPR000953">
    <property type="entry name" value="Chromo/chromo_shadow_dom"/>
</dbReference>
<dbReference type="InterPro" id="IPR002717">
    <property type="entry name" value="HAT_MYST-type"/>
</dbReference>
<dbReference type="InterPro" id="IPR050603">
    <property type="entry name" value="MYST_HAT"/>
</dbReference>
<dbReference type="InterPro" id="IPR025995">
    <property type="entry name" value="Tudor-knot"/>
</dbReference>
<dbReference type="InterPro" id="IPR036388">
    <property type="entry name" value="WH-like_DNA-bd_sf"/>
</dbReference>
<dbReference type="InterPro" id="IPR040706">
    <property type="entry name" value="Zf-MYST"/>
</dbReference>
<dbReference type="PANTHER" id="PTHR10615">
    <property type="entry name" value="HISTONE ACETYLTRANSFERASE"/>
    <property type="match status" value="1"/>
</dbReference>
<dbReference type="PANTHER" id="PTHR10615:SF219">
    <property type="entry name" value="HISTONE ACETYLTRANSFERASE KAT5"/>
    <property type="match status" value="1"/>
</dbReference>
<dbReference type="Pfam" id="PF01853">
    <property type="entry name" value="MOZ_SAS"/>
    <property type="match status" value="1"/>
</dbReference>
<dbReference type="Pfam" id="PF11717">
    <property type="entry name" value="Tudor-knot"/>
    <property type="match status" value="1"/>
</dbReference>
<dbReference type="Pfam" id="PF17772">
    <property type="entry name" value="zf-MYST"/>
    <property type="match status" value="1"/>
</dbReference>
<dbReference type="SMART" id="SM00298">
    <property type="entry name" value="CHROMO"/>
    <property type="match status" value="1"/>
</dbReference>
<dbReference type="SUPFAM" id="SSF55729">
    <property type="entry name" value="Acyl-CoA N-acyltransferases (Nat)"/>
    <property type="match status" value="1"/>
</dbReference>
<dbReference type="SUPFAM" id="SSF54160">
    <property type="entry name" value="Chromo domain-like"/>
    <property type="match status" value="1"/>
</dbReference>
<dbReference type="PROSITE" id="PS51726">
    <property type="entry name" value="MYST_HAT"/>
    <property type="match status" value="1"/>
</dbReference>
<protein>
    <recommendedName>
        <fullName evidence="7">Histone acetyltransferase KAT5</fullName>
        <ecNumber evidence="2">2.3.1.48</ecNumber>
    </recommendedName>
    <alternativeName>
        <fullName evidence="2">60 kDa Tat-interactive protein</fullName>
        <shortName evidence="2">Tip60</shortName>
    </alternativeName>
    <alternativeName>
        <fullName>Histone acetyltransferase HTATIP</fullName>
    </alternativeName>
    <alternativeName>
        <fullName>Lysine acetyltransferase 5</fullName>
    </alternativeName>
    <alternativeName>
        <fullName evidence="7">Protein 2-hydroxyisobutyryltransferase KAT5</fullName>
        <ecNumber evidence="2">2.3.1.-</ecNumber>
    </alternativeName>
    <alternativeName>
        <fullName evidence="7">Protein acetyltransferase KAT5</fullName>
        <ecNumber evidence="2">2.3.1.-</ecNumber>
    </alternativeName>
    <alternativeName>
        <fullName evidence="7">Protein crotonyltransferase KAT5</fullName>
        <ecNumber evidence="2">2.3.1.-</ecNumber>
    </alternativeName>
    <alternativeName>
        <fullName evidence="7">Protein lactyltransferase KAT5</fullName>
        <ecNumber evidence="2">2.3.1.-</ecNumber>
    </alternativeName>
</protein>
<feature type="chain" id="PRO_0000245806" description="Histone acetyltransferase KAT5">
    <location>
        <begin position="1"/>
        <end position="461"/>
    </location>
</feature>
<feature type="domain" description="Tudor-knot" evidence="4">
    <location>
        <begin position="8"/>
        <end position="65"/>
    </location>
</feature>
<feature type="domain" description="MYST-type HAT" evidence="5">
    <location>
        <begin position="175"/>
        <end position="452"/>
    </location>
</feature>
<feature type="zinc finger region" description="C2HC MYST-type" evidence="5">
    <location>
        <begin position="208"/>
        <end position="233"/>
    </location>
</feature>
<feature type="region of interest" description="Disordered" evidence="6">
    <location>
        <begin position="70"/>
        <end position="168"/>
    </location>
</feature>
<feature type="region of interest" description="Interaction with ATF2" evidence="2">
    <location>
        <begin position="316"/>
        <end position="461"/>
    </location>
</feature>
<feature type="compositionally biased region" description="Basic and acidic residues" evidence="6">
    <location>
        <begin position="90"/>
        <end position="100"/>
    </location>
</feature>
<feature type="active site" description="Proton donor/acceptor" evidence="3">
    <location>
        <position position="351"/>
    </location>
</feature>
<feature type="binding site" evidence="3">
    <location>
        <begin position="318"/>
        <end position="320"/>
    </location>
    <ligand>
        <name>acetyl-CoA</name>
        <dbReference type="ChEBI" id="CHEBI:57288"/>
    </ligand>
</feature>
<feature type="binding site" evidence="3">
    <location>
        <begin position="325"/>
        <end position="331"/>
    </location>
    <ligand>
        <name>acetyl-CoA</name>
        <dbReference type="ChEBI" id="CHEBI:57288"/>
    </ligand>
</feature>
<feature type="binding site" evidence="3">
    <location>
        <position position="355"/>
    </location>
    <ligand>
        <name>acetyl-CoA</name>
        <dbReference type="ChEBI" id="CHEBI:57288"/>
    </ligand>
</feature>
<feature type="binding site" evidence="3">
    <location>
        <position position="364"/>
    </location>
    <ligand>
        <name>acetyl-CoA</name>
        <dbReference type="ChEBI" id="CHEBI:57288"/>
    </ligand>
</feature>
<feature type="modified residue" description="N6-acetyllysine" evidence="2">
    <location>
        <position position="52"/>
    </location>
</feature>
<feature type="modified residue" description="Phosphoserine" evidence="2">
    <location>
        <position position="86"/>
    </location>
</feature>
<feature type="modified residue" description="Phosphoserine" evidence="2">
    <location>
        <position position="90"/>
    </location>
</feature>
<feature type="modified residue" description="N6-acetyllysine; by autocatalysis" evidence="2">
    <location>
        <position position="96"/>
    </location>
</feature>
<feature type="modified residue" description="N6-acetyllysine; by autocatalysis" evidence="2">
    <location>
        <position position="98"/>
    </location>
</feature>
<feature type="modified residue" description="N6-acetyllysine; by autocatalysis" evidence="2">
    <location>
        <position position="135"/>
    </location>
</feature>
<feature type="modified residue" description="N6-acetyllysine; by autocatalysis" evidence="2">
    <location>
        <position position="137"/>
    </location>
</feature>
<feature type="modified residue" description="Phosphoserine" evidence="2">
    <location>
        <position position="147"/>
    </location>
</feature>
<feature type="modified residue" description="N6-acetyllysine; by autocatalysis" evidence="2">
    <location>
        <position position="275"/>
    </location>
</feature>
<feature type="cross-link" description="Glycyl lysine isopeptide (Lys-Gly) (interchain with G-Cter in SUMO1); alternate" evidence="2">
    <location>
        <position position="378"/>
    </location>
</feature>
<feature type="cross-link" description="Glycyl lysine isopeptide (Lys-Gly) (interchain with G-Cter in SUMO2); alternate" evidence="2">
    <location>
        <position position="378"/>
    </location>
</feature>
<feature type="cross-link" description="Glycyl lysine isopeptide (Lys-Gly) (interchain with G-Cter in SUMO1)" evidence="2">
    <location>
        <position position="399"/>
    </location>
</feature>
<name>KAT5_PONAB</name>
<sequence length="461" mass="53077">MAEVGEIIEGCRLPVLRRNQDNEDEWPLAEILSVKDISGRKLFYVHYIDFNKRLDEWVTHERLDLKKIQFPKKEAKTPTKNGLPGSRPGSPEREVKRKVEVVSPATPVPSETAPASVFPQNGAARRAVAAQPGRKRKSNCLGTDEDSQDSSDGIPSAPRMTGSLVSDRSHDDIVTRMKNIECIELGRHRLKPWYFSPYPQELTTLPVLYLCEFCLKYGRSLKCLQRHLTKCDLRHPPGNEIYRKGTISFFEIDGRKNKSYSQNLCLLAKCFLDHKTLYYDTDPFLFYVMTEYDCKGFHIVGYFSKEKESTEDYNVACILTLPPYQRRGYGKLLIEFSYELSKVEGKTGTPEKPLSDLGLLSYRSYWSQTILEILMGLKSESGERPQITINEISEITSIKKEDVISTLQYLNLINYYKGQYILTLSEDIVDGHERAMLKRLLRIDSKCLHFTPKDWSKRGKW</sequence>
<gene>
    <name evidence="2" type="primary">KAT5</name>
    <name type="synonym">HTATIP</name>
    <name evidence="2" type="synonym">TIP60</name>
</gene>
<proteinExistence type="evidence at transcript level"/>
<keyword id="KW-0007">Acetylation</keyword>
<keyword id="KW-0010">Activator</keyword>
<keyword id="KW-0012">Acyltransferase</keyword>
<keyword id="KW-0137">Centromere</keyword>
<keyword id="KW-0156">Chromatin regulator</keyword>
<keyword id="KW-0158">Chromosome</keyword>
<keyword id="KW-0963">Cytoplasm</keyword>
<keyword id="KW-0206">Cytoskeleton</keyword>
<keyword id="KW-0227">DNA damage</keyword>
<keyword id="KW-0234">DNA repair</keyword>
<keyword id="KW-0341">Growth regulation</keyword>
<keyword id="KW-0391">Immunity</keyword>
<keyword id="KW-0399">Innate immunity</keyword>
<keyword id="KW-1017">Isopeptide bond</keyword>
<keyword id="KW-0995">Kinetochore</keyword>
<keyword id="KW-0479">Metal-binding</keyword>
<keyword id="KW-0539">Nucleus</keyword>
<keyword id="KW-0597">Phosphoprotein</keyword>
<keyword id="KW-1185">Reference proteome</keyword>
<keyword id="KW-0804">Transcription</keyword>
<keyword id="KW-0805">Transcription regulation</keyword>
<keyword id="KW-0808">Transferase</keyword>
<keyword id="KW-0832">Ubl conjugation</keyword>
<keyword id="KW-0862">Zinc</keyword>
<keyword id="KW-0863">Zinc-finger</keyword>